<sequence>MPMSARSRRSNPRLPPSPSSSSSSDAVRASPHSSPPSRLRPPSANPDVSSNILLFLIGFRLVNALTVRTFFQPDEFFQSLEPAWKIAFGTNQGPWITWEWEHQLRSSLHPLIFAAVYTVADLVARTLGLTPTSRAELLIAGPGITQAVIAAVGDFYTWKLARYIYGDRSHESWATVRIRSNAIEADADQLQLALTVVSLASVALYRSAWGERQTLAREALICGSSVLAVSTVVDRFFYGFWTFPPLRFLYFNVAQSLAAFYGRNDWSYYASQGYPLLLTTALPFTLVGLYRTLKTPPKLEKQKGSILVQLASISLAMPATLSVITHKEVRFIYPLLPALHILSASPLVEFFIPALTTTNREYISRRLTLIFLLWANVAIAIYTTLFHASGVISVLSYIREQHQIHGTANIPSLPKESPASYGGITTGFLMPCHSTPWRSHLVEPTIHAWALSCEPPVGLTAEEKAAYRDEADQFYDNPTQFLQDNMVGGLRHIPRRPSYATPPSSQRQPTQLFPPHEWPDYLVFFAQLEPTLKDALRGSSYGECWRTFNSAWHDDSRRRGDVVVWCLDHAKQQAWQSQKHQRELEDRDRQFDHIIKRFQRDATPSKSWHWSHWTSPFSSQSKSWSWPWERKKRTLFGYELPDLPQWGWFGKRKKKTLLSDFWF</sequence>
<feature type="chain" id="PRO_0000246263" description="GPI mannosyltransferase 3">
    <location>
        <begin position="1"/>
        <end position="663"/>
    </location>
</feature>
<feature type="transmembrane region" description="Helical" evidence="2">
    <location>
        <begin position="47"/>
        <end position="67"/>
    </location>
</feature>
<feature type="transmembrane region" description="Helical" evidence="2">
    <location>
        <begin position="110"/>
        <end position="130"/>
    </location>
</feature>
<feature type="transmembrane region" description="Helical" evidence="2">
    <location>
        <begin position="137"/>
        <end position="157"/>
    </location>
</feature>
<feature type="transmembrane region" description="Helical" evidence="2">
    <location>
        <begin position="226"/>
        <end position="246"/>
    </location>
</feature>
<feature type="transmembrane region" description="Helical" evidence="2">
    <location>
        <begin position="269"/>
        <end position="289"/>
    </location>
</feature>
<feature type="transmembrane region" description="Helical" evidence="2">
    <location>
        <begin position="304"/>
        <end position="324"/>
    </location>
</feature>
<feature type="transmembrane region" description="Helical" evidence="2">
    <location>
        <begin position="335"/>
        <end position="355"/>
    </location>
</feature>
<feature type="transmembrane region" description="Helical" evidence="2">
    <location>
        <begin position="367"/>
        <end position="387"/>
    </location>
</feature>
<feature type="region of interest" description="Disordered" evidence="3">
    <location>
        <begin position="1"/>
        <end position="44"/>
    </location>
</feature>
<feature type="region of interest" description="Disordered" evidence="3">
    <location>
        <begin position="492"/>
        <end position="512"/>
    </location>
</feature>
<feature type="compositionally biased region" description="Basic residues" evidence="3">
    <location>
        <begin position="1"/>
        <end position="11"/>
    </location>
</feature>
<feature type="compositionally biased region" description="Low complexity" evidence="3">
    <location>
        <begin position="19"/>
        <end position="42"/>
    </location>
</feature>
<feature type="compositionally biased region" description="Polar residues" evidence="3">
    <location>
        <begin position="501"/>
        <end position="511"/>
    </location>
</feature>
<organism>
    <name type="scientific">Emericella nidulans (strain FGSC A4 / ATCC 38163 / CBS 112.46 / NRRL 194 / M139)</name>
    <name type="common">Aspergillus nidulans</name>
    <dbReference type="NCBI Taxonomy" id="227321"/>
    <lineage>
        <taxon>Eukaryota</taxon>
        <taxon>Fungi</taxon>
        <taxon>Dikarya</taxon>
        <taxon>Ascomycota</taxon>
        <taxon>Pezizomycotina</taxon>
        <taxon>Eurotiomycetes</taxon>
        <taxon>Eurotiomycetidae</taxon>
        <taxon>Eurotiales</taxon>
        <taxon>Aspergillaceae</taxon>
        <taxon>Aspergillus</taxon>
        <taxon>Aspergillus subgen. Nidulantes</taxon>
    </lineage>
</organism>
<reference key="1">
    <citation type="journal article" date="2005" name="Nature">
        <title>Sequencing of Aspergillus nidulans and comparative analysis with A. fumigatus and A. oryzae.</title>
        <authorList>
            <person name="Galagan J.E."/>
            <person name="Calvo S.E."/>
            <person name="Cuomo C."/>
            <person name="Ma L.-J."/>
            <person name="Wortman J.R."/>
            <person name="Batzoglou S."/>
            <person name="Lee S.-I."/>
            <person name="Bastuerkmen M."/>
            <person name="Spevak C.C."/>
            <person name="Clutterbuck J."/>
            <person name="Kapitonov V."/>
            <person name="Jurka J."/>
            <person name="Scazzocchio C."/>
            <person name="Farman M.L."/>
            <person name="Butler J."/>
            <person name="Purcell S."/>
            <person name="Harris S."/>
            <person name="Braus G.H."/>
            <person name="Draht O."/>
            <person name="Busch S."/>
            <person name="D'Enfert C."/>
            <person name="Bouchier C."/>
            <person name="Goldman G.H."/>
            <person name="Bell-Pedersen D."/>
            <person name="Griffiths-Jones S."/>
            <person name="Doonan J.H."/>
            <person name="Yu J."/>
            <person name="Vienken K."/>
            <person name="Pain A."/>
            <person name="Freitag M."/>
            <person name="Selker E.U."/>
            <person name="Archer D.B."/>
            <person name="Penalva M.A."/>
            <person name="Oakley B.R."/>
            <person name="Momany M."/>
            <person name="Tanaka T."/>
            <person name="Kumagai T."/>
            <person name="Asai K."/>
            <person name="Machida M."/>
            <person name="Nierman W.C."/>
            <person name="Denning D.W."/>
            <person name="Caddick M.X."/>
            <person name="Hynes M."/>
            <person name="Paoletti M."/>
            <person name="Fischer R."/>
            <person name="Miller B.L."/>
            <person name="Dyer P.S."/>
            <person name="Sachs M.S."/>
            <person name="Osmani S.A."/>
            <person name="Birren B.W."/>
        </authorList>
    </citation>
    <scope>NUCLEOTIDE SEQUENCE [LARGE SCALE GENOMIC DNA]</scope>
    <source>
        <strain>FGSC A4 / ATCC 38163 / CBS 112.46 / NRRL 194 / M139</strain>
    </source>
</reference>
<reference key="2">
    <citation type="journal article" date="2009" name="Fungal Genet. Biol.">
        <title>The 2008 update of the Aspergillus nidulans genome annotation: a community effort.</title>
        <authorList>
            <person name="Wortman J.R."/>
            <person name="Gilsenan J.M."/>
            <person name="Joardar V."/>
            <person name="Deegan J."/>
            <person name="Clutterbuck J."/>
            <person name="Andersen M.R."/>
            <person name="Archer D."/>
            <person name="Bencina M."/>
            <person name="Braus G."/>
            <person name="Coutinho P."/>
            <person name="von Dohren H."/>
            <person name="Doonan J."/>
            <person name="Driessen A.J."/>
            <person name="Durek P."/>
            <person name="Espeso E."/>
            <person name="Fekete E."/>
            <person name="Flipphi M."/>
            <person name="Estrada C.G."/>
            <person name="Geysens S."/>
            <person name="Goldman G."/>
            <person name="de Groot P.W."/>
            <person name="Hansen K."/>
            <person name="Harris S.D."/>
            <person name="Heinekamp T."/>
            <person name="Helmstaedt K."/>
            <person name="Henrissat B."/>
            <person name="Hofmann G."/>
            <person name="Homan T."/>
            <person name="Horio T."/>
            <person name="Horiuchi H."/>
            <person name="James S."/>
            <person name="Jones M."/>
            <person name="Karaffa L."/>
            <person name="Karanyi Z."/>
            <person name="Kato M."/>
            <person name="Keller N."/>
            <person name="Kelly D.E."/>
            <person name="Kiel J.A."/>
            <person name="Kim J.M."/>
            <person name="van der Klei I.J."/>
            <person name="Klis F.M."/>
            <person name="Kovalchuk A."/>
            <person name="Krasevec N."/>
            <person name="Kubicek C.P."/>
            <person name="Liu B."/>
            <person name="Maccabe A."/>
            <person name="Meyer V."/>
            <person name="Mirabito P."/>
            <person name="Miskei M."/>
            <person name="Mos M."/>
            <person name="Mullins J."/>
            <person name="Nelson D.R."/>
            <person name="Nielsen J."/>
            <person name="Oakley B.R."/>
            <person name="Osmani S.A."/>
            <person name="Pakula T."/>
            <person name="Paszewski A."/>
            <person name="Paulsen I."/>
            <person name="Pilsyk S."/>
            <person name="Pocsi I."/>
            <person name="Punt P.J."/>
            <person name="Ram A.F."/>
            <person name="Ren Q."/>
            <person name="Robellet X."/>
            <person name="Robson G."/>
            <person name="Seiboth B."/>
            <person name="van Solingen P."/>
            <person name="Specht T."/>
            <person name="Sun J."/>
            <person name="Taheri-Talesh N."/>
            <person name="Takeshita N."/>
            <person name="Ussery D."/>
            <person name="vanKuyk P.A."/>
            <person name="Visser H."/>
            <person name="van de Vondervoort P.J."/>
            <person name="de Vries R.P."/>
            <person name="Walton J."/>
            <person name="Xiang X."/>
            <person name="Xiong Y."/>
            <person name="Zeng A.P."/>
            <person name="Brandt B.W."/>
            <person name="Cornell M.J."/>
            <person name="van den Hondel C.A."/>
            <person name="Visser J."/>
            <person name="Oliver S.G."/>
            <person name="Turner G."/>
        </authorList>
    </citation>
    <scope>GENOME REANNOTATION</scope>
    <source>
        <strain>FGSC A4 / ATCC 38163 / CBS 112.46 / NRRL 194 / M139</strain>
    </source>
</reference>
<gene>
    <name type="primary">gpi10</name>
    <name type="ORF">AN1811</name>
</gene>
<dbReference type="EC" id="2.4.1.-"/>
<dbReference type="EMBL" id="AACD01000029">
    <property type="protein sequence ID" value="EAA64976.1"/>
    <property type="molecule type" value="Genomic_DNA"/>
</dbReference>
<dbReference type="EMBL" id="BN001307">
    <property type="protein sequence ID" value="CBF85606.1"/>
    <property type="molecule type" value="Genomic_DNA"/>
</dbReference>
<dbReference type="RefSeq" id="XP_659415.1">
    <property type="nucleotide sequence ID" value="XM_654323.1"/>
</dbReference>
<dbReference type="FunCoup" id="Q5BCB9">
    <property type="interactions" value="837"/>
</dbReference>
<dbReference type="STRING" id="227321.Q5BCB9"/>
<dbReference type="CAZy" id="GT22">
    <property type="family name" value="Glycosyltransferase Family 22"/>
</dbReference>
<dbReference type="EnsemblFungi" id="CBF85606">
    <property type="protein sequence ID" value="CBF85606"/>
    <property type="gene ID" value="ANIA_01811"/>
</dbReference>
<dbReference type="KEGG" id="ani:ANIA_01811"/>
<dbReference type="eggNOG" id="KOG1771">
    <property type="taxonomic scope" value="Eukaryota"/>
</dbReference>
<dbReference type="HOGENOM" id="CLU_012353_1_0_1"/>
<dbReference type="InParanoid" id="Q5BCB9"/>
<dbReference type="OMA" id="HEWPDYL"/>
<dbReference type="OrthoDB" id="416834at2759"/>
<dbReference type="UniPathway" id="UPA00196"/>
<dbReference type="Proteomes" id="UP000000560">
    <property type="component" value="Chromosome VII"/>
</dbReference>
<dbReference type="GO" id="GO:0005789">
    <property type="term" value="C:endoplasmic reticulum membrane"/>
    <property type="evidence" value="ECO:0000318"/>
    <property type="project" value="GO_Central"/>
</dbReference>
<dbReference type="GO" id="GO:0000026">
    <property type="term" value="F:alpha-1,2-mannosyltransferase activity"/>
    <property type="evidence" value="ECO:0000318"/>
    <property type="project" value="GO_Central"/>
</dbReference>
<dbReference type="GO" id="GO:0006506">
    <property type="term" value="P:GPI anchor biosynthetic process"/>
    <property type="evidence" value="ECO:0000318"/>
    <property type="project" value="GO_Central"/>
</dbReference>
<dbReference type="InterPro" id="IPR005599">
    <property type="entry name" value="GPI_mannosylTrfase"/>
</dbReference>
<dbReference type="PANTHER" id="PTHR22760">
    <property type="entry name" value="GLYCOSYLTRANSFERASE"/>
    <property type="match status" value="1"/>
</dbReference>
<dbReference type="PANTHER" id="PTHR22760:SF4">
    <property type="entry name" value="GPI MANNOSYLTRANSFERASE 3"/>
    <property type="match status" value="1"/>
</dbReference>
<dbReference type="Pfam" id="PF03901">
    <property type="entry name" value="Glyco_transf_22"/>
    <property type="match status" value="2"/>
</dbReference>
<comment type="function">
    <text evidence="1">Mannosyltransferase involved in glycosylphosphatidylinositol-anchor biosynthesis. Transfers the third mannose to Man2-GlcN-acyl-PI during GPI precursor assembly (By similarity).</text>
</comment>
<comment type="pathway">
    <text>Glycolipid biosynthesis; glycosylphosphatidylinositol-anchor biosynthesis.</text>
</comment>
<comment type="subcellular location">
    <subcellularLocation>
        <location evidence="1">Endoplasmic reticulum membrane</location>
        <topology evidence="1">Multi-pass membrane protein</topology>
    </subcellularLocation>
</comment>
<comment type="similarity">
    <text evidence="4">Belongs to the glycosyltransferase 22 family. PIGB subfamily.</text>
</comment>
<accession>Q5BCB9</accession>
<accession>C8VPH0</accession>
<proteinExistence type="inferred from homology"/>
<keyword id="KW-0256">Endoplasmic reticulum</keyword>
<keyword id="KW-0328">Glycosyltransferase</keyword>
<keyword id="KW-0337">GPI-anchor biosynthesis</keyword>
<keyword id="KW-0472">Membrane</keyword>
<keyword id="KW-1185">Reference proteome</keyword>
<keyword id="KW-0808">Transferase</keyword>
<keyword id="KW-0812">Transmembrane</keyword>
<keyword id="KW-1133">Transmembrane helix</keyword>
<name>GPI10_EMENI</name>
<protein>
    <recommendedName>
        <fullName>GPI mannosyltransferase 3</fullName>
        <ecNumber>2.4.1.-</ecNumber>
    </recommendedName>
    <alternativeName>
        <fullName>GPI mannosyltransferase III</fullName>
        <shortName>GPI-MT-III</shortName>
    </alternativeName>
    <alternativeName>
        <fullName>Glycosylphosphatidylinositol-anchor biosynthesis protein 10</fullName>
    </alternativeName>
</protein>
<evidence type="ECO:0000250" key="1"/>
<evidence type="ECO:0000255" key="2"/>
<evidence type="ECO:0000256" key="3">
    <source>
        <dbReference type="SAM" id="MobiDB-lite"/>
    </source>
</evidence>
<evidence type="ECO:0000305" key="4"/>